<sequence>MQRLAMDLRMLSRELSLYLEHQVRVGFFGSGVGLSLILGFSVAYAFYYLSSIAKKPQLVTGGESFSRFLQDHCPVVTETYYPTVWCWEGRGQTLLRPFITSKPPVQYRNELIKTADGGQISLDWFDNDNSTCYMDASTRPTILLLPGLTGTSKESYILHMIHLSEELGYRCVVFNNRGVAGENLLTPRTYCCANTEDLETVIHHVHSLYPSAPFLAAGVSMGGMLLLNYLGKIGSKTPLMAAATFSVGWNTFACSESLEKPLNWLLFNYYLTTCLQSSVNKHRHMFVKQVDMDHVMKAKSIREFDKRFTSVMFGYQTIDDYYTDASPSPRLKSVGIPVLCLNSVDDVFSPSHAIPIETAKQNPNVALVLTSYGGHIGFLEGIWPRQSTYMDRVFKQFVQAMVEHGHELS</sequence>
<comment type="function">
    <text evidence="2">Phospholipase that may play a role in phospholipids remodeling. May selectively cleave myristate (C14)-containing phosphatidylcholines through its predominant phospholipase 1 activity, cleaving preferentially acyl groups in sn1 position. In parallel, may have a minor phospholipase 2 activity acting on acyl groups in position sn2. In addition to (C14)-containing phosphatidylcholines, may also act on other medium-chain-containing and oxidatively truncated phospholipids.</text>
</comment>
<comment type="catalytic activity">
    <reaction evidence="2">
        <text>a 1,2-diacyl-sn-glycero-3-phosphocholine + H2O = a 1-acyl-sn-glycero-3-phosphocholine + a fatty acid + H(+)</text>
        <dbReference type="Rhea" id="RHEA:15801"/>
        <dbReference type="ChEBI" id="CHEBI:15377"/>
        <dbReference type="ChEBI" id="CHEBI:15378"/>
        <dbReference type="ChEBI" id="CHEBI:28868"/>
        <dbReference type="ChEBI" id="CHEBI:57643"/>
        <dbReference type="ChEBI" id="CHEBI:58168"/>
        <dbReference type="EC" id="3.1.1.4"/>
    </reaction>
    <physiologicalReaction direction="left-to-right" evidence="2">
        <dbReference type="Rhea" id="RHEA:15802"/>
    </physiologicalReaction>
</comment>
<comment type="catalytic activity">
    <reaction evidence="2">
        <text>a 1,2-diacyl-sn-glycero-3-phosphocholine + H2O = a 2-acyl-sn-glycero-3-phosphocholine + a fatty acid + H(+)</text>
        <dbReference type="Rhea" id="RHEA:18689"/>
        <dbReference type="ChEBI" id="CHEBI:15377"/>
        <dbReference type="ChEBI" id="CHEBI:15378"/>
        <dbReference type="ChEBI" id="CHEBI:28868"/>
        <dbReference type="ChEBI" id="CHEBI:57643"/>
        <dbReference type="ChEBI" id="CHEBI:57875"/>
        <dbReference type="EC" id="3.1.1.32"/>
    </reaction>
    <physiologicalReaction direction="left-to-right" evidence="2">
        <dbReference type="Rhea" id="RHEA:18690"/>
    </physiologicalReaction>
</comment>
<comment type="catalytic activity">
    <reaction evidence="2">
        <text>1-tetradecanoyl-2-(9Z,12Z-octadecadienoyl)-sn-glycero-3-phosphocholine + H2O = 2-(9Z,12Z-octadecadienoyl)-sn-glycero-3-phosphocholine + tetradecanoate + H(+)</text>
        <dbReference type="Rhea" id="RHEA:54388"/>
        <dbReference type="ChEBI" id="CHEBI:15377"/>
        <dbReference type="ChEBI" id="CHEBI:15378"/>
        <dbReference type="ChEBI" id="CHEBI:30807"/>
        <dbReference type="ChEBI" id="CHEBI:76084"/>
        <dbReference type="ChEBI" id="CHEBI:86094"/>
    </reaction>
    <physiologicalReaction direction="left-to-right" evidence="2">
        <dbReference type="Rhea" id="RHEA:54389"/>
    </physiologicalReaction>
</comment>
<comment type="catalytic activity">
    <reaction evidence="2">
        <text>1-tetradecanoyl-2-(9Z,12Z-octadecadienoyl)-sn-glycero-3-phosphocholine + H2O = 1-tetradecanoyl-sn-glycero-3-phosphocholine + (9Z,12Z)-octadecadienoate + H(+)</text>
        <dbReference type="Rhea" id="RHEA:54392"/>
        <dbReference type="ChEBI" id="CHEBI:15377"/>
        <dbReference type="ChEBI" id="CHEBI:15378"/>
        <dbReference type="ChEBI" id="CHEBI:30245"/>
        <dbReference type="ChEBI" id="CHEBI:64489"/>
        <dbReference type="ChEBI" id="CHEBI:86094"/>
    </reaction>
    <physiologicalReaction direction="left-to-right" evidence="2">
        <dbReference type="Rhea" id="RHEA:54393"/>
    </physiologicalReaction>
</comment>
<comment type="catalytic activity">
    <reaction evidence="2">
        <text>1-tetradecanoyl-2-(5Z,8Z,11Z,14Z-eicosatetraenoyl)-sn-glycero-3-phosphocholine + H2O = 2-(5Z,8Z,11Z,14Z)-eicosatetraenoyl-sn-glycero-3-phosphocholine + tetradecanoate + H(+)</text>
        <dbReference type="Rhea" id="RHEA:54396"/>
        <dbReference type="ChEBI" id="CHEBI:15377"/>
        <dbReference type="ChEBI" id="CHEBI:15378"/>
        <dbReference type="ChEBI" id="CHEBI:30807"/>
        <dbReference type="ChEBI" id="CHEBI:76079"/>
        <dbReference type="ChEBI" id="CHEBI:86102"/>
    </reaction>
    <physiologicalReaction direction="left-to-right" evidence="2">
        <dbReference type="Rhea" id="RHEA:54397"/>
    </physiologicalReaction>
</comment>
<comment type="catalytic activity">
    <reaction evidence="2">
        <text>1-tetradecanoyl-2-(4Z,7Z,10Z,13Z,16Z,19Z-docosahexaenoyl)-sn-glycero-3-phosphocholine + H2O = 2-(4Z,7Z,10Z,13Z,16Z,19Z-docosahexaenoyl)-sn-glycero-3-phosphocholine + tetradecanoate + H(+)</text>
        <dbReference type="Rhea" id="RHEA:54400"/>
        <dbReference type="ChEBI" id="CHEBI:15377"/>
        <dbReference type="ChEBI" id="CHEBI:15378"/>
        <dbReference type="ChEBI" id="CHEBI:30807"/>
        <dbReference type="ChEBI" id="CHEBI:76085"/>
        <dbReference type="ChEBI" id="CHEBI:86162"/>
    </reaction>
    <physiologicalReaction direction="left-to-right" evidence="2">
        <dbReference type="Rhea" id="RHEA:54401"/>
    </physiologicalReaction>
</comment>
<comment type="catalytic activity">
    <reaction evidence="2">
        <text>1,2-ditetradecanoyl-sn-glycero-3-phosphocholine + H2O = 2-tetradecanoyl-sn-glycero-3-phosphocholine + tetradecanoate + H(+)</text>
        <dbReference type="Rhea" id="RHEA:54404"/>
        <dbReference type="ChEBI" id="CHEBI:15377"/>
        <dbReference type="ChEBI" id="CHEBI:15378"/>
        <dbReference type="ChEBI" id="CHEBI:30807"/>
        <dbReference type="ChEBI" id="CHEBI:45240"/>
        <dbReference type="ChEBI" id="CHEBI:131738"/>
    </reaction>
    <physiologicalReaction direction="left-to-right" evidence="2">
        <dbReference type="Rhea" id="RHEA:54405"/>
    </physiologicalReaction>
</comment>
<comment type="catalytic activity">
    <reaction evidence="2">
        <text>1-octadecanoyl-2-acetyl-sn-glycero-3-phosphocholine + H2O = 1-octadecanoyl-sn-glycero-3-phosphocholine + acetate + H(+)</text>
        <dbReference type="Rhea" id="RHEA:54408"/>
        <dbReference type="ChEBI" id="CHEBI:15377"/>
        <dbReference type="ChEBI" id="CHEBI:15378"/>
        <dbReference type="ChEBI" id="CHEBI:30089"/>
        <dbReference type="ChEBI" id="CHEBI:73858"/>
        <dbReference type="ChEBI" id="CHEBI:75220"/>
    </reaction>
    <physiologicalReaction direction="left-to-right" evidence="2">
        <dbReference type="Rhea" id="RHEA:54409"/>
    </physiologicalReaction>
</comment>
<comment type="catalytic activity">
    <reaction evidence="2">
        <text>1,2-ditetradecanoyl-sn-glycero-3-phosphocholine + H2O = 1-tetradecanoyl-sn-glycero-3-phosphocholine + tetradecanoate + H(+)</text>
        <dbReference type="Rhea" id="RHEA:54456"/>
        <dbReference type="ChEBI" id="CHEBI:15377"/>
        <dbReference type="ChEBI" id="CHEBI:15378"/>
        <dbReference type="ChEBI" id="CHEBI:30807"/>
        <dbReference type="ChEBI" id="CHEBI:45240"/>
        <dbReference type="ChEBI" id="CHEBI:64489"/>
    </reaction>
    <physiologicalReaction direction="left-to-right" evidence="2">
        <dbReference type="Rhea" id="RHEA:54457"/>
    </physiologicalReaction>
</comment>
<comment type="catalytic activity">
    <reaction evidence="2">
        <text>1-octadecanoyl-2-pentanoyl-sn-glycero-3-phosphocholine + H2O = pentanoate + 1-octadecanoyl-sn-glycero-3-phosphocholine + H(+)</text>
        <dbReference type="Rhea" id="RHEA:54460"/>
        <dbReference type="ChEBI" id="CHEBI:15377"/>
        <dbReference type="ChEBI" id="CHEBI:15378"/>
        <dbReference type="ChEBI" id="CHEBI:31011"/>
        <dbReference type="ChEBI" id="CHEBI:73858"/>
        <dbReference type="ChEBI" id="CHEBI:138211"/>
    </reaction>
    <physiologicalReaction direction="left-to-right" evidence="2">
        <dbReference type="Rhea" id="RHEA:54461"/>
    </physiologicalReaction>
</comment>
<comment type="catalytic activity">
    <reaction evidence="2">
        <text>1-octadecanoyl-2-hexanoyl-sn-glycero-3-phosphocholine + H2O = hexanoate + 1-octadecanoyl-sn-glycero-3-phosphocholine + H(+)</text>
        <dbReference type="Rhea" id="RHEA:54464"/>
        <dbReference type="ChEBI" id="CHEBI:15377"/>
        <dbReference type="ChEBI" id="CHEBI:15378"/>
        <dbReference type="ChEBI" id="CHEBI:17120"/>
        <dbReference type="ChEBI" id="CHEBI:73858"/>
        <dbReference type="ChEBI" id="CHEBI:138212"/>
    </reaction>
    <physiologicalReaction direction="left-to-right" evidence="2">
        <dbReference type="Rhea" id="RHEA:54465"/>
    </physiologicalReaction>
</comment>
<comment type="catalytic activity">
    <reaction evidence="2">
        <text>1-octadecanoyl-2-octanoyl-sn-glycero-3-phosphocholine + H2O = 1-octadecanoyl-sn-glycero-3-phosphocholine + octanoate + H(+)</text>
        <dbReference type="Rhea" id="RHEA:54468"/>
        <dbReference type="ChEBI" id="CHEBI:15377"/>
        <dbReference type="ChEBI" id="CHEBI:15378"/>
        <dbReference type="ChEBI" id="CHEBI:25646"/>
        <dbReference type="ChEBI" id="CHEBI:73858"/>
        <dbReference type="ChEBI" id="CHEBI:138213"/>
    </reaction>
    <physiologicalReaction direction="left-to-right" evidence="2">
        <dbReference type="Rhea" id="RHEA:54469"/>
    </physiologicalReaction>
</comment>
<comment type="catalytic activity">
    <reaction evidence="2">
        <text>1-octadecanoyl-2-nonanoyl-sn-glycero-3-phosphocholine + H2O = nonanoate + 1-octadecanoyl-sn-glycero-3-phosphocholine + H(+)</text>
        <dbReference type="Rhea" id="RHEA:54472"/>
        <dbReference type="ChEBI" id="CHEBI:15377"/>
        <dbReference type="ChEBI" id="CHEBI:15378"/>
        <dbReference type="ChEBI" id="CHEBI:32361"/>
        <dbReference type="ChEBI" id="CHEBI:73858"/>
        <dbReference type="ChEBI" id="CHEBI:138214"/>
    </reaction>
    <physiologicalReaction direction="left-to-right" evidence="2">
        <dbReference type="Rhea" id="RHEA:54473"/>
    </physiologicalReaction>
</comment>
<comment type="catalytic activity">
    <reaction evidence="2">
        <text>1-O-hexadecyl-2-nonadioyl-sn-glycero-3-phosphocholine + H2O = nonanedioate + 1-O-hexadecyl-sn-glycero-3-phosphocholine + H(+)</text>
        <dbReference type="Rhea" id="RHEA:54552"/>
        <dbReference type="ChEBI" id="CHEBI:15377"/>
        <dbReference type="ChEBI" id="CHEBI:15378"/>
        <dbReference type="ChEBI" id="CHEBI:64496"/>
        <dbReference type="ChEBI" id="CHEBI:78208"/>
        <dbReference type="ChEBI" id="CHEBI:138269"/>
    </reaction>
    <physiologicalReaction direction="left-to-right" evidence="2">
        <dbReference type="Rhea" id="RHEA:54553"/>
    </physiologicalReaction>
</comment>
<comment type="catalytic activity">
    <reaction evidence="2">
        <text>1-hexadecanoyl-2-nonadioyl-sn-glycero-3-phosphocholine + H2O = nonanedioate + 1-hexadecanoyl-sn-glycero-3-phosphocholine + H(+)</text>
        <dbReference type="Rhea" id="RHEA:41388"/>
        <dbReference type="ChEBI" id="CHEBI:15377"/>
        <dbReference type="ChEBI" id="CHEBI:15378"/>
        <dbReference type="ChEBI" id="CHEBI:72998"/>
        <dbReference type="ChEBI" id="CHEBI:78207"/>
        <dbReference type="ChEBI" id="CHEBI:78208"/>
    </reaction>
    <physiologicalReaction direction="left-to-right" evidence="2">
        <dbReference type="Rhea" id="RHEA:41389"/>
    </physiologicalReaction>
</comment>
<comment type="catalytic activity">
    <reaction evidence="2">
        <text>1-hexadecanoyl-2-(9-oxononanoyl)-sn-glycero-3-phosphocholine + H2O = 9-oxononanoate + 1-hexadecanoyl-sn-glycero-3-phosphocholine + H(+)</text>
        <dbReference type="Rhea" id="RHEA:41179"/>
        <dbReference type="ChEBI" id="CHEBI:15377"/>
        <dbReference type="ChEBI" id="CHEBI:15378"/>
        <dbReference type="ChEBI" id="CHEBI:61042"/>
        <dbReference type="ChEBI" id="CHEBI:72998"/>
        <dbReference type="ChEBI" id="CHEBI:77812"/>
    </reaction>
    <physiologicalReaction direction="left-to-right" evidence="2">
        <dbReference type="Rhea" id="RHEA:41180"/>
    </physiologicalReaction>
</comment>
<comment type="catalytic activity">
    <reaction evidence="2">
        <text>1-hexadecanoyl-2-(5-oxopentanoyl)-sn-glycero-3-phosphocholine + H2O = 5-oxopentanoate + 1-hexadecanoyl-sn-glycero-3-phosphocholine + H(+)</text>
        <dbReference type="Rhea" id="RHEA:40483"/>
        <dbReference type="ChEBI" id="CHEBI:15377"/>
        <dbReference type="ChEBI" id="CHEBI:15378"/>
        <dbReference type="ChEBI" id="CHEBI:16120"/>
        <dbReference type="ChEBI" id="CHEBI:72998"/>
        <dbReference type="ChEBI" id="CHEBI:77890"/>
    </reaction>
    <physiologicalReaction direction="left-to-right" evidence="2">
        <dbReference type="Rhea" id="RHEA:40484"/>
    </physiologicalReaction>
</comment>
<comment type="catalytic activity">
    <reaction evidence="2">
        <text>1-hexadecanoyl-2-glutaroyl-sn-glycero-3-phosphocholine + H2O = glutarate + 1-hexadecanoyl-sn-glycero-3-phosphocholine + H(+)</text>
        <dbReference type="Rhea" id="RHEA:41159"/>
        <dbReference type="ChEBI" id="CHEBI:15377"/>
        <dbReference type="ChEBI" id="CHEBI:15378"/>
        <dbReference type="ChEBI" id="CHEBI:30921"/>
        <dbReference type="ChEBI" id="CHEBI:72998"/>
        <dbReference type="ChEBI" id="CHEBI:77756"/>
    </reaction>
    <physiologicalReaction direction="left-to-right" evidence="2">
        <dbReference type="Rhea" id="RHEA:41160"/>
    </physiologicalReaction>
</comment>
<comment type="catalytic activity">
    <reaction evidence="2">
        <text>1-O-hexadecyl-2-acetyl-sn-glycero-3-phosphocholine + H2O = 1-O-hexadecyl-sn-glycero-3-phosphocholine + acetate + H(+)</text>
        <dbReference type="Rhea" id="RHEA:40479"/>
        <dbReference type="ChEBI" id="CHEBI:15377"/>
        <dbReference type="ChEBI" id="CHEBI:15378"/>
        <dbReference type="ChEBI" id="CHEBI:30089"/>
        <dbReference type="ChEBI" id="CHEBI:44811"/>
        <dbReference type="ChEBI" id="CHEBI:64496"/>
    </reaction>
    <physiologicalReaction direction="left-to-right" evidence="2">
        <dbReference type="Rhea" id="RHEA:40480"/>
    </physiologicalReaction>
</comment>
<comment type="subcellular location">
    <subcellularLocation>
        <location evidence="6">Membrane</location>
        <topology evidence="6">Single-pass type II membrane protein</topology>
    </subcellularLocation>
</comment>
<comment type="alternative products">
    <event type="alternative splicing"/>
    <isoform>
        <id>Q8WU67-1</id>
        <name>1</name>
        <sequence type="displayed"/>
    </isoform>
    <isoform>
        <id>Q8WU67-2</id>
        <name>2</name>
        <sequence type="described" ref="VSP_056137 VSP_056138"/>
    </isoform>
</comment>
<comment type="similarity">
    <text evidence="6">Belongs to the AB hydrolase superfamily. AB hydrolase 4 family.</text>
</comment>
<comment type="sequence caution" evidence="6">
    <conflict type="erroneous initiation">
        <sequence resource="EMBL-CDS" id="AAC19155"/>
    </conflict>
</comment>
<evidence type="ECO:0000250" key="1"/>
<evidence type="ECO:0000250" key="2">
    <source>
        <dbReference type="UniProtKB" id="Q91ZH7"/>
    </source>
</evidence>
<evidence type="ECO:0000255" key="3"/>
<evidence type="ECO:0000269" key="4">
    <source>
    </source>
</evidence>
<evidence type="ECO:0000303" key="5">
    <source>
    </source>
</evidence>
<evidence type="ECO:0000305" key="6"/>
<evidence type="ECO:0000312" key="7">
    <source>
        <dbReference type="HGNC" id="HGNC:18718"/>
    </source>
</evidence>
<protein>
    <recommendedName>
        <fullName evidence="6">Phospholipase ABHD3</fullName>
        <ecNumber evidence="2">3.1.1.32</ecNumber>
        <ecNumber evidence="2">3.1.1.4</ecNumber>
    </recommendedName>
    <alternativeName>
        <fullName evidence="6">Abhydrolase domain-containing protein 3</fullName>
    </alternativeName>
</protein>
<proteinExistence type="evidence at protein level"/>
<keyword id="KW-0025">Alternative splicing</keyword>
<keyword id="KW-0378">Hydrolase</keyword>
<keyword id="KW-0443">Lipid metabolism</keyword>
<keyword id="KW-0472">Membrane</keyword>
<keyword id="KW-1208">Phospholipid metabolism</keyword>
<keyword id="KW-1267">Proteomics identification</keyword>
<keyword id="KW-1185">Reference proteome</keyword>
<keyword id="KW-0719">Serine esterase</keyword>
<keyword id="KW-0735">Signal-anchor</keyword>
<keyword id="KW-0812">Transmembrane</keyword>
<keyword id="KW-1133">Transmembrane helix</keyword>
<organism>
    <name type="scientific">Homo sapiens</name>
    <name type="common">Human</name>
    <dbReference type="NCBI Taxonomy" id="9606"/>
    <lineage>
        <taxon>Eukaryota</taxon>
        <taxon>Metazoa</taxon>
        <taxon>Chordata</taxon>
        <taxon>Craniata</taxon>
        <taxon>Vertebrata</taxon>
        <taxon>Euteleostomi</taxon>
        <taxon>Mammalia</taxon>
        <taxon>Eutheria</taxon>
        <taxon>Euarchontoglires</taxon>
        <taxon>Primates</taxon>
        <taxon>Haplorrhini</taxon>
        <taxon>Catarrhini</taxon>
        <taxon>Hominidae</taxon>
        <taxon>Homo</taxon>
    </lineage>
</organism>
<feature type="chain" id="PRO_0000280208" description="Phospholipase ABHD3">
    <location>
        <begin position="1"/>
        <end position="409"/>
    </location>
</feature>
<feature type="transmembrane region" description="Helical; Signal-anchor for type II membrane protein" evidence="3">
    <location>
        <begin position="26"/>
        <end position="46"/>
    </location>
</feature>
<feature type="domain" description="AB hydrolase-1" evidence="3">
    <location>
        <begin position="140"/>
        <end position="233"/>
    </location>
</feature>
<feature type="active site" description="Charge relay system" evidence="1">
    <location>
        <position position="220"/>
    </location>
</feature>
<feature type="active site" description="Charge relay system" evidence="1">
    <location>
        <position position="346"/>
    </location>
</feature>
<feature type="active site" description="Charge relay system" evidence="1">
    <location>
        <position position="375"/>
    </location>
</feature>
<feature type="splice variant" id="VSP_056137" description="In isoform 2." evidence="5">
    <original>PQLVTGGESFSRFLQDHCPVVTETYYPTVWCWEGRGQTLLRPFITSKPPVQYRNELIKTADGGQISLDWFDNDNSTCYMDA</original>
    <variation>RTTRRSGAGRVEDRPCLDLSSLRSPRCSTGMNLLKLQMEDRFHWTGLIMITVRVIWMPAPDLLSYCCLASREQARSHISFI</variation>
    <location>
        <begin position="56"/>
        <end position="136"/>
    </location>
</feature>
<feature type="splice variant" id="VSP_056138" description="In isoform 2." evidence="5">
    <location>
        <begin position="137"/>
        <end position="409"/>
    </location>
</feature>
<feature type="sequence variant" id="VAR_031089" description="In dbSNP:rs17851878." evidence="4">
    <original>R</original>
    <variation>C</variation>
    <location>
        <position position="3"/>
    </location>
</feature>
<dbReference type="EC" id="3.1.1.32" evidence="2"/>
<dbReference type="EC" id="3.1.1.4" evidence="2"/>
<dbReference type="EMBL" id="AF007152">
    <property type="protein sequence ID" value="AAC19155.1"/>
    <property type="status" value="ALT_INIT"/>
    <property type="molecule type" value="mRNA"/>
</dbReference>
<dbReference type="EMBL" id="AK298728">
    <property type="protein sequence ID" value="BAH12858.1"/>
    <property type="molecule type" value="mRNA"/>
</dbReference>
<dbReference type="EMBL" id="EF444943">
    <property type="protein sequence ID" value="ACA05928.1"/>
    <property type="molecule type" value="Genomic_DNA"/>
</dbReference>
<dbReference type="EMBL" id="AC106037">
    <property type="status" value="NOT_ANNOTATED_CDS"/>
    <property type="molecule type" value="Genomic_DNA"/>
</dbReference>
<dbReference type="EMBL" id="CH471088">
    <property type="protein sequence ID" value="EAX01131.1"/>
    <property type="molecule type" value="Genomic_DNA"/>
</dbReference>
<dbReference type="EMBL" id="BC021196">
    <property type="protein sequence ID" value="AAH21196.1"/>
    <property type="molecule type" value="mRNA"/>
</dbReference>
<dbReference type="CCDS" id="CCDS32802.1">
    <molecule id="Q8WU67-1"/>
</dbReference>
<dbReference type="RefSeq" id="NP_001295185.1">
    <property type="nucleotide sequence ID" value="NM_001308256.1"/>
</dbReference>
<dbReference type="RefSeq" id="NP_001295186.1">
    <property type="nucleotide sequence ID" value="NM_001308257.1"/>
</dbReference>
<dbReference type="RefSeq" id="NP_612213.2">
    <molecule id="Q8WU67-1"/>
    <property type="nucleotide sequence ID" value="NM_138340.4"/>
</dbReference>
<dbReference type="BioGRID" id="128149">
    <property type="interactions" value="29"/>
</dbReference>
<dbReference type="FunCoup" id="Q8WU67">
    <property type="interactions" value="314"/>
</dbReference>
<dbReference type="IntAct" id="Q8WU67">
    <property type="interactions" value="20"/>
</dbReference>
<dbReference type="MINT" id="Q8WU67"/>
<dbReference type="STRING" id="9606.ENSP00000289119"/>
<dbReference type="ESTHER" id="human-ABHD3">
    <property type="family name" value="abh_upf0017"/>
</dbReference>
<dbReference type="iPTMnet" id="Q8WU67"/>
<dbReference type="PhosphoSitePlus" id="Q8WU67"/>
<dbReference type="BioMuta" id="ABHD3"/>
<dbReference type="DMDM" id="134035377"/>
<dbReference type="jPOST" id="Q8WU67"/>
<dbReference type="MassIVE" id="Q8WU67"/>
<dbReference type="PaxDb" id="9606-ENSP00000289119"/>
<dbReference type="PeptideAtlas" id="Q8WU67"/>
<dbReference type="ProteomicsDB" id="74636">
    <molecule id="Q8WU67-1"/>
</dbReference>
<dbReference type="Pumba" id="Q8WU67"/>
<dbReference type="Antibodypedia" id="2532">
    <property type="antibodies" value="120 antibodies from 24 providers"/>
</dbReference>
<dbReference type="DNASU" id="171586"/>
<dbReference type="Ensembl" id="ENST00000289119.7">
    <molecule id="Q8WU67-1"/>
    <property type="protein sequence ID" value="ENSP00000289119.2"/>
    <property type="gene ID" value="ENSG00000158201.10"/>
</dbReference>
<dbReference type="Ensembl" id="ENST00000577891.1">
    <molecule id="Q8WU67-2"/>
    <property type="protein sequence ID" value="ENSP00000463365.1"/>
    <property type="gene ID" value="ENSG00000158201.10"/>
</dbReference>
<dbReference type="GeneID" id="171586"/>
<dbReference type="KEGG" id="hsa:171586"/>
<dbReference type="MANE-Select" id="ENST00000289119.7">
    <property type="protein sequence ID" value="ENSP00000289119.2"/>
    <property type="RefSeq nucleotide sequence ID" value="NM_138340.5"/>
    <property type="RefSeq protein sequence ID" value="NP_612213.2"/>
</dbReference>
<dbReference type="UCSC" id="uc002ktl.2">
    <molecule id="Q8WU67-1"/>
    <property type="organism name" value="human"/>
</dbReference>
<dbReference type="AGR" id="HGNC:18718"/>
<dbReference type="CTD" id="171586"/>
<dbReference type="DisGeNET" id="171586"/>
<dbReference type="GeneCards" id="ABHD3"/>
<dbReference type="HGNC" id="HGNC:18718">
    <property type="gene designation" value="ABHD3"/>
</dbReference>
<dbReference type="HPA" id="ENSG00000158201">
    <property type="expression patterns" value="Low tissue specificity"/>
</dbReference>
<dbReference type="MIM" id="612197">
    <property type="type" value="gene"/>
</dbReference>
<dbReference type="neXtProt" id="NX_Q8WU67"/>
<dbReference type="OpenTargets" id="ENSG00000158201"/>
<dbReference type="PharmGKB" id="PA38659"/>
<dbReference type="VEuPathDB" id="HostDB:ENSG00000158201"/>
<dbReference type="eggNOG" id="KOG1838">
    <property type="taxonomic scope" value="Eukaryota"/>
</dbReference>
<dbReference type="GeneTree" id="ENSGT00950000182902"/>
<dbReference type="HOGENOM" id="CLU_032487_4_0_1"/>
<dbReference type="InParanoid" id="Q8WU67"/>
<dbReference type="OMA" id="LDWHGPH"/>
<dbReference type="OrthoDB" id="247542at2759"/>
<dbReference type="PAN-GO" id="Q8WU67">
    <property type="GO annotations" value="7 GO annotations based on evolutionary models"/>
</dbReference>
<dbReference type="PhylomeDB" id="Q8WU67"/>
<dbReference type="TreeFam" id="TF313195"/>
<dbReference type="PathwayCommons" id="Q8WU67"/>
<dbReference type="Reactome" id="R-HSA-1483191">
    <property type="pathway name" value="Synthesis of PC"/>
</dbReference>
<dbReference type="SignaLink" id="Q8WU67"/>
<dbReference type="BioGRID-ORCS" id="171586">
    <property type="hits" value="24 hits in 1158 CRISPR screens"/>
</dbReference>
<dbReference type="ChiTaRS" id="ABHD3">
    <property type="organism name" value="human"/>
</dbReference>
<dbReference type="GenomeRNAi" id="171586"/>
<dbReference type="Pharos" id="Q8WU67">
    <property type="development level" value="Tbio"/>
</dbReference>
<dbReference type="PRO" id="PR:Q8WU67"/>
<dbReference type="Proteomes" id="UP000005640">
    <property type="component" value="Chromosome 18"/>
</dbReference>
<dbReference type="RNAct" id="Q8WU67">
    <property type="molecule type" value="protein"/>
</dbReference>
<dbReference type="Bgee" id="ENSG00000158201">
    <property type="expression patterns" value="Expressed in jejunal mucosa and 191 other cell types or tissues"/>
</dbReference>
<dbReference type="ExpressionAtlas" id="Q8WU67">
    <property type="expression patterns" value="baseline and differential"/>
</dbReference>
<dbReference type="GO" id="GO:0005886">
    <property type="term" value="C:plasma membrane"/>
    <property type="evidence" value="ECO:0000304"/>
    <property type="project" value="Reactome"/>
</dbReference>
<dbReference type="GO" id="GO:0008126">
    <property type="term" value="F:acetylesterase activity"/>
    <property type="evidence" value="ECO:0000318"/>
    <property type="project" value="GO_Central"/>
</dbReference>
<dbReference type="GO" id="GO:0047372">
    <property type="term" value="F:monoacylglycerol lipase activity"/>
    <property type="evidence" value="ECO:0000318"/>
    <property type="project" value="GO_Central"/>
</dbReference>
<dbReference type="GO" id="GO:0008970">
    <property type="term" value="F:phospholipase A1 activity"/>
    <property type="evidence" value="ECO:0000315"/>
    <property type="project" value="UniProtKB"/>
</dbReference>
<dbReference type="GO" id="GO:0004623">
    <property type="term" value="F:phospholipase A2 activity"/>
    <property type="evidence" value="ECO:0000315"/>
    <property type="project" value="UniProtKB"/>
</dbReference>
<dbReference type="GO" id="GO:0051792">
    <property type="term" value="P:medium-chain fatty acid biosynthetic process"/>
    <property type="evidence" value="ECO:0000318"/>
    <property type="project" value="GO_Central"/>
</dbReference>
<dbReference type="GO" id="GO:0051793">
    <property type="term" value="P:medium-chain fatty acid catabolic process"/>
    <property type="evidence" value="ECO:0000318"/>
    <property type="project" value="GO_Central"/>
</dbReference>
<dbReference type="GO" id="GO:0006656">
    <property type="term" value="P:phosphatidylcholine biosynthetic process"/>
    <property type="evidence" value="ECO:0000304"/>
    <property type="project" value="Reactome"/>
</dbReference>
<dbReference type="GO" id="GO:0046470">
    <property type="term" value="P:phosphatidylcholine metabolic process"/>
    <property type="evidence" value="ECO:0000315"/>
    <property type="project" value="UniProtKB"/>
</dbReference>
<dbReference type="FunFam" id="3.40.50.1820:FF:000079">
    <property type="entry name" value="Abhydrolase domain-containing 3"/>
    <property type="match status" value="1"/>
</dbReference>
<dbReference type="Gene3D" id="3.40.50.1820">
    <property type="entry name" value="alpha/beta hydrolase"/>
    <property type="match status" value="1"/>
</dbReference>
<dbReference type="InterPro" id="IPR000073">
    <property type="entry name" value="AB_hydrolase_1"/>
</dbReference>
<dbReference type="InterPro" id="IPR000952">
    <property type="entry name" value="AB_hydrolase_4_CS"/>
</dbReference>
<dbReference type="InterPro" id="IPR050960">
    <property type="entry name" value="AB_hydrolase_4_sf"/>
</dbReference>
<dbReference type="InterPro" id="IPR029058">
    <property type="entry name" value="AB_hydrolase_fold"/>
</dbReference>
<dbReference type="InterPro" id="IPR012020">
    <property type="entry name" value="ABHD4"/>
</dbReference>
<dbReference type="PANTHER" id="PTHR10794">
    <property type="entry name" value="ABHYDROLASE DOMAIN-CONTAINING PROTEIN"/>
    <property type="match status" value="1"/>
</dbReference>
<dbReference type="PANTHER" id="PTHR10794:SF50">
    <property type="entry name" value="PHOSPHOLIPASE ABHD3"/>
    <property type="match status" value="1"/>
</dbReference>
<dbReference type="Pfam" id="PF00561">
    <property type="entry name" value="Abhydrolase_1"/>
    <property type="match status" value="1"/>
</dbReference>
<dbReference type="PIRSF" id="PIRSF005211">
    <property type="entry name" value="Ab_hydro_YheT"/>
    <property type="match status" value="1"/>
</dbReference>
<dbReference type="SUPFAM" id="SSF53474">
    <property type="entry name" value="alpha/beta-Hydrolases"/>
    <property type="match status" value="1"/>
</dbReference>
<dbReference type="PROSITE" id="PS01133">
    <property type="entry name" value="UPF0017"/>
    <property type="match status" value="1"/>
</dbReference>
<name>ABHD3_HUMAN</name>
<reference key="1">
    <citation type="submission" date="1997-06" db="EMBL/GenBank/DDBJ databases">
        <authorList>
            <person name="Yu W."/>
            <person name="Sarginson J."/>
            <person name="Gibbs R.A."/>
        </authorList>
    </citation>
    <scope>NUCLEOTIDE SEQUENCE [LARGE SCALE MRNA] (ISOFORM 1)</scope>
    <source>
        <tissue>Brain</tissue>
    </source>
</reference>
<reference key="2">
    <citation type="journal article" date="2004" name="Nat. Genet.">
        <title>Complete sequencing and characterization of 21,243 full-length human cDNAs.</title>
        <authorList>
            <person name="Ota T."/>
            <person name="Suzuki Y."/>
            <person name="Nishikawa T."/>
            <person name="Otsuki T."/>
            <person name="Sugiyama T."/>
            <person name="Irie R."/>
            <person name="Wakamatsu A."/>
            <person name="Hayashi K."/>
            <person name="Sato H."/>
            <person name="Nagai K."/>
            <person name="Kimura K."/>
            <person name="Makita H."/>
            <person name="Sekine M."/>
            <person name="Obayashi M."/>
            <person name="Nishi T."/>
            <person name="Shibahara T."/>
            <person name="Tanaka T."/>
            <person name="Ishii S."/>
            <person name="Yamamoto J."/>
            <person name="Saito K."/>
            <person name="Kawai Y."/>
            <person name="Isono Y."/>
            <person name="Nakamura Y."/>
            <person name="Nagahari K."/>
            <person name="Murakami K."/>
            <person name="Yasuda T."/>
            <person name="Iwayanagi T."/>
            <person name="Wagatsuma M."/>
            <person name="Shiratori A."/>
            <person name="Sudo H."/>
            <person name="Hosoiri T."/>
            <person name="Kaku Y."/>
            <person name="Kodaira H."/>
            <person name="Kondo H."/>
            <person name="Sugawara M."/>
            <person name="Takahashi M."/>
            <person name="Kanda K."/>
            <person name="Yokoi T."/>
            <person name="Furuya T."/>
            <person name="Kikkawa E."/>
            <person name="Omura Y."/>
            <person name="Abe K."/>
            <person name="Kamihara K."/>
            <person name="Katsuta N."/>
            <person name="Sato K."/>
            <person name="Tanikawa M."/>
            <person name="Yamazaki M."/>
            <person name="Ninomiya K."/>
            <person name="Ishibashi T."/>
            <person name="Yamashita H."/>
            <person name="Murakawa K."/>
            <person name="Fujimori K."/>
            <person name="Tanai H."/>
            <person name="Kimata M."/>
            <person name="Watanabe M."/>
            <person name="Hiraoka S."/>
            <person name="Chiba Y."/>
            <person name="Ishida S."/>
            <person name="Ono Y."/>
            <person name="Takiguchi S."/>
            <person name="Watanabe S."/>
            <person name="Yosida M."/>
            <person name="Hotuta T."/>
            <person name="Kusano J."/>
            <person name="Kanehori K."/>
            <person name="Takahashi-Fujii A."/>
            <person name="Hara H."/>
            <person name="Tanase T.-O."/>
            <person name="Nomura Y."/>
            <person name="Togiya S."/>
            <person name="Komai F."/>
            <person name="Hara R."/>
            <person name="Takeuchi K."/>
            <person name="Arita M."/>
            <person name="Imose N."/>
            <person name="Musashino K."/>
            <person name="Yuuki H."/>
            <person name="Oshima A."/>
            <person name="Sasaki N."/>
            <person name="Aotsuka S."/>
            <person name="Yoshikawa Y."/>
            <person name="Matsunawa H."/>
            <person name="Ichihara T."/>
            <person name="Shiohata N."/>
            <person name="Sano S."/>
            <person name="Moriya S."/>
            <person name="Momiyama H."/>
            <person name="Satoh N."/>
            <person name="Takami S."/>
            <person name="Terashima Y."/>
            <person name="Suzuki O."/>
            <person name="Nakagawa S."/>
            <person name="Senoh A."/>
            <person name="Mizoguchi H."/>
            <person name="Goto Y."/>
            <person name="Shimizu F."/>
            <person name="Wakebe H."/>
            <person name="Hishigaki H."/>
            <person name="Watanabe T."/>
            <person name="Sugiyama A."/>
            <person name="Takemoto M."/>
            <person name="Kawakami B."/>
            <person name="Yamazaki M."/>
            <person name="Watanabe K."/>
            <person name="Kumagai A."/>
            <person name="Itakura S."/>
            <person name="Fukuzumi Y."/>
            <person name="Fujimori Y."/>
            <person name="Komiyama M."/>
            <person name="Tashiro H."/>
            <person name="Tanigami A."/>
            <person name="Fujiwara T."/>
            <person name="Ono T."/>
            <person name="Yamada K."/>
            <person name="Fujii Y."/>
            <person name="Ozaki K."/>
            <person name="Hirao M."/>
            <person name="Ohmori Y."/>
            <person name="Kawabata A."/>
            <person name="Hikiji T."/>
            <person name="Kobatake N."/>
            <person name="Inagaki H."/>
            <person name="Ikema Y."/>
            <person name="Okamoto S."/>
            <person name="Okitani R."/>
            <person name="Kawakami T."/>
            <person name="Noguchi S."/>
            <person name="Itoh T."/>
            <person name="Shigeta K."/>
            <person name="Senba T."/>
            <person name="Matsumura K."/>
            <person name="Nakajima Y."/>
            <person name="Mizuno T."/>
            <person name="Morinaga M."/>
            <person name="Sasaki M."/>
            <person name="Togashi T."/>
            <person name="Oyama M."/>
            <person name="Hata H."/>
            <person name="Watanabe M."/>
            <person name="Komatsu T."/>
            <person name="Mizushima-Sugano J."/>
            <person name="Satoh T."/>
            <person name="Shirai Y."/>
            <person name="Takahashi Y."/>
            <person name="Nakagawa K."/>
            <person name="Okumura K."/>
            <person name="Nagase T."/>
            <person name="Nomura N."/>
            <person name="Kikuchi H."/>
            <person name="Masuho Y."/>
            <person name="Yamashita R."/>
            <person name="Nakai K."/>
            <person name="Yada T."/>
            <person name="Nakamura Y."/>
            <person name="Ohara O."/>
            <person name="Isogai T."/>
            <person name="Sugano S."/>
        </authorList>
    </citation>
    <scope>NUCLEOTIDE SEQUENCE [LARGE SCALE MRNA] (ISOFORM 2)</scope>
</reference>
<reference key="3">
    <citation type="submission" date="2007-02" db="EMBL/GenBank/DDBJ databases">
        <authorList>
            <consortium name="NHLBI resequencing and genotyping service (RS&amp;G)"/>
        </authorList>
    </citation>
    <scope>NUCLEOTIDE SEQUENCE [GENOMIC DNA]</scope>
</reference>
<reference key="4">
    <citation type="journal article" date="2005" name="Nature">
        <title>DNA sequence and analysis of human chromosome 18.</title>
        <authorList>
            <person name="Nusbaum C."/>
            <person name="Zody M.C."/>
            <person name="Borowsky M.L."/>
            <person name="Kamal M."/>
            <person name="Kodira C.D."/>
            <person name="Taylor T.D."/>
            <person name="Whittaker C.A."/>
            <person name="Chang J.L."/>
            <person name="Cuomo C.A."/>
            <person name="Dewar K."/>
            <person name="FitzGerald M.G."/>
            <person name="Yang X."/>
            <person name="Abouelleil A."/>
            <person name="Allen N.R."/>
            <person name="Anderson S."/>
            <person name="Bloom T."/>
            <person name="Bugalter B."/>
            <person name="Butler J."/>
            <person name="Cook A."/>
            <person name="DeCaprio D."/>
            <person name="Engels R."/>
            <person name="Garber M."/>
            <person name="Gnirke A."/>
            <person name="Hafez N."/>
            <person name="Hall J.L."/>
            <person name="Norman C.H."/>
            <person name="Itoh T."/>
            <person name="Jaffe D.B."/>
            <person name="Kuroki Y."/>
            <person name="Lehoczky J."/>
            <person name="Lui A."/>
            <person name="Macdonald P."/>
            <person name="Mauceli E."/>
            <person name="Mikkelsen T.S."/>
            <person name="Naylor J.W."/>
            <person name="Nicol R."/>
            <person name="Nguyen C."/>
            <person name="Noguchi H."/>
            <person name="O'Leary S.B."/>
            <person name="Piqani B."/>
            <person name="Smith C.L."/>
            <person name="Talamas J.A."/>
            <person name="Topham K."/>
            <person name="Totoki Y."/>
            <person name="Toyoda A."/>
            <person name="Wain H.M."/>
            <person name="Young S.K."/>
            <person name="Zeng Q."/>
            <person name="Zimmer A.R."/>
            <person name="Fujiyama A."/>
            <person name="Hattori M."/>
            <person name="Birren B.W."/>
            <person name="Sakaki Y."/>
            <person name="Lander E.S."/>
        </authorList>
    </citation>
    <scope>NUCLEOTIDE SEQUENCE [LARGE SCALE GENOMIC DNA]</scope>
</reference>
<reference key="5">
    <citation type="submission" date="2005-07" db="EMBL/GenBank/DDBJ databases">
        <authorList>
            <person name="Mural R.J."/>
            <person name="Istrail S."/>
            <person name="Sutton G.G."/>
            <person name="Florea L."/>
            <person name="Halpern A.L."/>
            <person name="Mobarry C.M."/>
            <person name="Lippert R."/>
            <person name="Walenz B."/>
            <person name="Shatkay H."/>
            <person name="Dew I."/>
            <person name="Miller J.R."/>
            <person name="Flanigan M.J."/>
            <person name="Edwards N.J."/>
            <person name="Bolanos R."/>
            <person name="Fasulo D."/>
            <person name="Halldorsson B.V."/>
            <person name="Hannenhalli S."/>
            <person name="Turner R."/>
            <person name="Yooseph S."/>
            <person name="Lu F."/>
            <person name="Nusskern D.R."/>
            <person name="Shue B.C."/>
            <person name="Zheng X.H."/>
            <person name="Zhong F."/>
            <person name="Delcher A.L."/>
            <person name="Huson D.H."/>
            <person name="Kravitz S.A."/>
            <person name="Mouchard L."/>
            <person name="Reinert K."/>
            <person name="Remington K.A."/>
            <person name="Clark A.G."/>
            <person name="Waterman M.S."/>
            <person name="Eichler E.E."/>
            <person name="Adams M.D."/>
            <person name="Hunkapiller M.W."/>
            <person name="Myers E.W."/>
            <person name="Venter J.C."/>
        </authorList>
    </citation>
    <scope>NUCLEOTIDE SEQUENCE [LARGE SCALE GENOMIC DNA]</scope>
</reference>
<reference key="6">
    <citation type="journal article" date="2004" name="Genome Res.">
        <title>The status, quality, and expansion of the NIH full-length cDNA project: the Mammalian Gene Collection (MGC).</title>
        <authorList>
            <consortium name="The MGC Project Team"/>
        </authorList>
    </citation>
    <scope>NUCLEOTIDE SEQUENCE [LARGE SCALE MRNA] (ISOFORM 1)</scope>
    <scope>VARIANT CYS-3</scope>
    <source>
        <tissue>Lung</tissue>
    </source>
</reference>
<gene>
    <name evidence="7" type="primary">ABHD3</name>
</gene>
<accession>Q8WU67</accession>
<accession>B0YIV0</accession>
<accession>B7Z5C2</accession>
<accession>O43411</accession>